<feature type="chain" id="PRO_0000260707" description="1,4-alpha-glucan branching enzyme GlgB">
    <location>
        <begin position="1"/>
        <end position="764"/>
    </location>
</feature>
<feature type="active site" description="Nucleophile" evidence="1">
    <location>
        <position position="431"/>
    </location>
</feature>
<feature type="active site" description="Proton donor" evidence="1">
    <location>
        <position position="484"/>
    </location>
</feature>
<accession>Q3AYE2</accession>
<evidence type="ECO:0000255" key="1">
    <source>
        <dbReference type="HAMAP-Rule" id="MF_00685"/>
    </source>
</evidence>
<proteinExistence type="inferred from homology"/>
<organism>
    <name type="scientific">Synechococcus sp. (strain CC9902)</name>
    <dbReference type="NCBI Taxonomy" id="316279"/>
    <lineage>
        <taxon>Bacteria</taxon>
        <taxon>Bacillati</taxon>
        <taxon>Cyanobacteriota</taxon>
        <taxon>Cyanophyceae</taxon>
        <taxon>Synechococcales</taxon>
        <taxon>Synechococcaceae</taxon>
        <taxon>Synechococcus</taxon>
    </lineage>
</organism>
<comment type="function">
    <text evidence="1">Catalyzes the formation of the alpha-1,6-glucosidic linkages in glycogen by scission of a 1,4-alpha-linked oligosaccharide from growing alpha-1,4-glucan chains and the subsequent attachment of the oligosaccharide to the alpha-1,6 position.</text>
</comment>
<comment type="catalytic activity">
    <reaction evidence="1">
        <text>Transfers a segment of a (1-&gt;4)-alpha-D-glucan chain to a primary hydroxy group in a similar glucan chain.</text>
        <dbReference type="EC" id="2.4.1.18"/>
    </reaction>
</comment>
<comment type="pathway">
    <text evidence="1">Glycan biosynthesis; glycogen biosynthesis.</text>
</comment>
<comment type="subunit">
    <text evidence="1">Monomer.</text>
</comment>
<comment type="similarity">
    <text evidence="1">Belongs to the glycosyl hydrolase 13 family. GlgB subfamily.</text>
</comment>
<protein>
    <recommendedName>
        <fullName evidence="1">1,4-alpha-glucan branching enzyme GlgB</fullName>
        <ecNumber evidence="1">2.4.1.18</ecNumber>
    </recommendedName>
    <alternativeName>
        <fullName evidence="1">1,4-alpha-D-glucan:1,4-alpha-D-glucan 6-glucosyl-transferase</fullName>
    </alternativeName>
    <alternativeName>
        <fullName evidence="1">Alpha-(1-&gt;4)-glucan branching enzyme</fullName>
    </alternativeName>
    <alternativeName>
        <fullName evidence="1">Glycogen branching enzyme</fullName>
        <shortName evidence="1">BE</shortName>
    </alternativeName>
</protein>
<sequence>MGGAAVLDWMVQDGVRLENCRHDHPLAVLGPQPDDQGWTVRVWMPEAQKVTLLLGSQEIVTSTPNHPWIFEASTPSDPGSNYKLRVERGGITTEQHDPWAFRHEWMGEMDRHLFAEGNHHHIWQRMGAHLTQIDGISGVMFCLWAPNALTASVLGDLNSWDGRHHPMQKRLGGIWELFVPGLDAGTLYKYEIRSQEGHCYQKADPYGFQHEVRPDNSSVVARLEGYSWSDSSWMQDRDSRNALDQPISVYEMHIGSWIHASADEPWIQPDGQPRAPVPAADMKPGARLLTYAELSDRLIPYVKERGFTHIELMPITEHPFDGSWGYQVTGWYAPTSRYGTPDEFRAFVDRCHAEGIGVIIDWVPGHFPKDAHGLAFFDGTHLYEHGDPRIGEHKEWGTLIFNYSRNEVRNFLVANLVFWFEQFHIDGIRVDAVASMLYRDYLRPDGEWLPNENGGRENTEAVRFLQQANHVLFQHYPGALSIAEESTTWPMVTQPTDMGGLGFNLKWNMGWMHDMLDYFELDPWFRQFHQNNITFSIWYTYTENFMLALSHDEVVHGKSHLLHKMPGDDWQKYANTRALLAYMWTHPGKKTIFMGMEFGQRAEWNVWGDLEWDLLNYEPHKGIQRLVDDLNVLYKAQPALWRDDFDQFGFQWIDCNDNRHSVISFMRRDSASGTWLVVVANFTPQSHANYRVGVPLEGFYEEIFNTDAAKYGGSNLGNMGGKPTDACGIHGYEHSLDLCLPPLSLVVFQHDPKRTLIESSAPSD</sequence>
<keyword id="KW-0119">Carbohydrate metabolism</keyword>
<keyword id="KW-0320">Glycogen biosynthesis</keyword>
<keyword id="KW-0321">Glycogen metabolism</keyword>
<keyword id="KW-0328">Glycosyltransferase</keyword>
<keyword id="KW-1185">Reference proteome</keyword>
<keyword id="KW-0808">Transferase</keyword>
<reference key="1">
    <citation type="submission" date="2005-08" db="EMBL/GenBank/DDBJ databases">
        <title>Complete sequence of Synechococcus sp. CC9902.</title>
        <authorList>
            <person name="Copeland A."/>
            <person name="Lucas S."/>
            <person name="Lapidus A."/>
            <person name="Barry K."/>
            <person name="Detter J.C."/>
            <person name="Glavina T."/>
            <person name="Hammon N."/>
            <person name="Israni S."/>
            <person name="Pitluck S."/>
            <person name="Martinez M."/>
            <person name="Schmutz J."/>
            <person name="Larimer F."/>
            <person name="Land M."/>
            <person name="Kyrpides N."/>
            <person name="Ivanova N."/>
            <person name="Richardson P."/>
        </authorList>
    </citation>
    <scope>NUCLEOTIDE SEQUENCE [LARGE SCALE GENOMIC DNA]</scope>
    <source>
        <strain>CC9902</strain>
    </source>
</reference>
<gene>
    <name evidence="1" type="primary">glgB</name>
    <name type="ordered locus">Syncc9902_0919</name>
</gene>
<name>GLGB_SYNS9</name>
<dbReference type="EC" id="2.4.1.18" evidence="1"/>
<dbReference type="EMBL" id="CP000097">
    <property type="protein sequence ID" value="ABB25885.1"/>
    <property type="molecule type" value="Genomic_DNA"/>
</dbReference>
<dbReference type="RefSeq" id="WP_011359721.1">
    <property type="nucleotide sequence ID" value="NC_007513.1"/>
</dbReference>
<dbReference type="SMR" id="Q3AYE2"/>
<dbReference type="STRING" id="316279.Syncc9902_0919"/>
<dbReference type="CAZy" id="CBM48">
    <property type="family name" value="Carbohydrate-Binding Module Family 48"/>
</dbReference>
<dbReference type="CAZy" id="GH13">
    <property type="family name" value="Glycoside Hydrolase Family 13"/>
</dbReference>
<dbReference type="KEGG" id="sye:Syncc9902_0919"/>
<dbReference type="eggNOG" id="COG0296">
    <property type="taxonomic scope" value="Bacteria"/>
</dbReference>
<dbReference type="HOGENOM" id="CLU_004245_3_2_3"/>
<dbReference type="OrthoDB" id="9800174at2"/>
<dbReference type="UniPathway" id="UPA00164"/>
<dbReference type="Proteomes" id="UP000002712">
    <property type="component" value="Chromosome"/>
</dbReference>
<dbReference type="GO" id="GO:0005829">
    <property type="term" value="C:cytosol"/>
    <property type="evidence" value="ECO:0007669"/>
    <property type="project" value="TreeGrafter"/>
</dbReference>
<dbReference type="GO" id="GO:0003844">
    <property type="term" value="F:1,4-alpha-glucan branching enzyme activity"/>
    <property type="evidence" value="ECO:0007669"/>
    <property type="project" value="UniProtKB-UniRule"/>
</dbReference>
<dbReference type="GO" id="GO:0043169">
    <property type="term" value="F:cation binding"/>
    <property type="evidence" value="ECO:0007669"/>
    <property type="project" value="InterPro"/>
</dbReference>
<dbReference type="GO" id="GO:0004553">
    <property type="term" value="F:hydrolase activity, hydrolyzing O-glycosyl compounds"/>
    <property type="evidence" value="ECO:0007669"/>
    <property type="project" value="InterPro"/>
</dbReference>
<dbReference type="GO" id="GO:0005978">
    <property type="term" value="P:glycogen biosynthetic process"/>
    <property type="evidence" value="ECO:0007669"/>
    <property type="project" value="UniProtKB-UniRule"/>
</dbReference>
<dbReference type="CDD" id="cd11322">
    <property type="entry name" value="AmyAc_Glg_BE"/>
    <property type="match status" value="1"/>
</dbReference>
<dbReference type="CDD" id="cd02855">
    <property type="entry name" value="E_set_GBE_prok_N"/>
    <property type="match status" value="1"/>
</dbReference>
<dbReference type="FunFam" id="2.60.40.10:FF:000169">
    <property type="entry name" value="1,4-alpha-glucan branching enzyme GlgB"/>
    <property type="match status" value="1"/>
</dbReference>
<dbReference type="FunFam" id="2.60.40.1180:FF:000002">
    <property type="entry name" value="1,4-alpha-glucan branching enzyme GlgB"/>
    <property type="match status" value="1"/>
</dbReference>
<dbReference type="FunFam" id="3.20.20.80:FF:000003">
    <property type="entry name" value="1,4-alpha-glucan branching enzyme GlgB"/>
    <property type="match status" value="1"/>
</dbReference>
<dbReference type="Gene3D" id="3.20.20.80">
    <property type="entry name" value="Glycosidases"/>
    <property type="match status" value="1"/>
</dbReference>
<dbReference type="Gene3D" id="2.60.40.1180">
    <property type="entry name" value="Golgi alpha-mannosidase II"/>
    <property type="match status" value="1"/>
</dbReference>
<dbReference type="Gene3D" id="2.60.40.10">
    <property type="entry name" value="Immunoglobulins"/>
    <property type="match status" value="2"/>
</dbReference>
<dbReference type="HAMAP" id="MF_00685">
    <property type="entry name" value="GlgB"/>
    <property type="match status" value="1"/>
</dbReference>
<dbReference type="InterPro" id="IPR006048">
    <property type="entry name" value="A-amylase/branching_C"/>
</dbReference>
<dbReference type="InterPro" id="IPR037439">
    <property type="entry name" value="Branching_enzy"/>
</dbReference>
<dbReference type="InterPro" id="IPR006407">
    <property type="entry name" value="GlgB"/>
</dbReference>
<dbReference type="InterPro" id="IPR054169">
    <property type="entry name" value="GlgB_N"/>
</dbReference>
<dbReference type="InterPro" id="IPR044143">
    <property type="entry name" value="GlgB_N_E_set_prok"/>
</dbReference>
<dbReference type="InterPro" id="IPR006047">
    <property type="entry name" value="Glyco_hydro_13_cat_dom"/>
</dbReference>
<dbReference type="InterPro" id="IPR004193">
    <property type="entry name" value="Glyco_hydro_13_N"/>
</dbReference>
<dbReference type="InterPro" id="IPR013780">
    <property type="entry name" value="Glyco_hydro_b"/>
</dbReference>
<dbReference type="InterPro" id="IPR017853">
    <property type="entry name" value="Glycoside_hydrolase_SF"/>
</dbReference>
<dbReference type="InterPro" id="IPR013783">
    <property type="entry name" value="Ig-like_fold"/>
</dbReference>
<dbReference type="InterPro" id="IPR014756">
    <property type="entry name" value="Ig_E-set"/>
</dbReference>
<dbReference type="NCBIfam" id="TIGR01515">
    <property type="entry name" value="branching_enzym"/>
    <property type="match status" value="1"/>
</dbReference>
<dbReference type="NCBIfam" id="NF003811">
    <property type="entry name" value="PRK05402.1"/>
    <property type="match status" value="1"/>
</dbReference>
<dbReference type="NCBIfam" id="NF008967">
    <property type="entry name" value="PRK12313.1"/>
    <property type="match status" value="1"/>
</dbReference>
<dbReference type="PANTHER" id="PTHR43651">
    <property type="entry name" value="1,4-ALPHA-GLUCAN-BRANCHING ENZYME"/>
    <property type="match status" value="1"/>
</dbReference>
<dbReference type="PANTHER" id="PTHR43651:SF3">
    <property type="entry name" value="1,4-ALPHA-GLUCAN-BRANCHING ENZYME"/>
    <property type="match status" value="1"/>
</dbReference>
<dbReference type="Pfam" id="PF00128">
    <property type="entry name" value="Alpha-amylase"/>
    <property type="match status" value="2"/>
</dbReference>
<dbReference type="Pfam" id="PF02806">
    <property type="entry name" value="Alpha-amylase_C"/>
    <property type="match status" value="1"/>
</dbReference>
<dbReference type="Pfam" id="PF02922">
    <property type="entry name" value="CBM_48"/>
    <property type="match status" value="1"/>
</dbReference>
<dbReference type="Pfam" id="PF22019">
    <property type="entry name" value="GlgB_N"/>
    <property type="match status" value="1"/>
</dbReference>
<dbReference type="PIRSF" id="PIRSF000463">
    <property type="entry name" value="GlgB"/>
    <property type="match status" value="1"/>
</dbReference>
<dbReference type="SMART" id="SM00642">
    <property type="entry name" value="Aamy"/>
    <property type="match status" value="1"/>
</dbReference>
<dbReference type="SUPFAM" id="SSF51445">
    <property type="entry name" value="(Trans)glycosidases"/>
    <property type="match status" value="1"/>
</dbReference>
<dbReference type="SUPFAM" id="SSF81296">
    <property type="entry name" value="E set domains"/>
    <property type="match status" value="2"/>
</dbReference>
<dbReference type="SUPFAM" id="SSF51011">
    <property type="entry name" value="Glycosyl hydrolase domain"/>
    <property type="match status" value="1"/>
</dbReference>